<protein>
    <recommendedName>
        <fullName>Calcium up-regulated protein G</fullName>
    </recommendedName>
</protein>
<dbReference type="EMBL" id="AY282573">
    <property type="protein sequence ID" value="AAP40295.1"/>
    <property type="molecule type" value="Genomic_DNA"/>
</dbReference>
<dbReference type="EMBL" id="AAFI02000149">
    <property type="protein sequence ID" value="EAL62454.1"/>
    <property type="molecule type" value="Genomic_DNA"/>
</dbReference>
<dbReference type="RefSeq" id="XP_635993.1">
    <property type="nucleotide sequence ID" value="XM_630901.1"/>
</dbReference>
<dbReference type="FunCoup" id="Q7Z1Z9">
    <property type="interactions" value="198"/>
</dbReference>
<dbReference type="CAZy" id="CBM13">
    <property type="family name" value="Carbohydrate-Binding Module Family 13"/>
</dbReference>
<dbReference type="PaxDb" id="44689-DDB0191379"/>
<dbReference type="EnsemblProtists" id="EAL62454">
    <property type="protein sequence ID" value="EAL62454"/>
    <property type="gene ID" value="DDB_G0289883"/>
</dbReference>
<dbReference type="GeneID" id="8627408"/>
<dbReference type="KEGG" id="ddi:DDB_G0289883"/>
<dbReference type="dictyBase" id="DDB_G0289883">
    <property type="gene designation" value="cupG"/>
</dbReference>
<dbReference type="VEuPathDB" id="AmoebaDB:DDB_G0289883"/>
<dbReference type="HOGENOM" id="CLU_020711_0_0_1"/>
<dbReference type="InParanoid" id="Q7Z1Z9"/>
<dbReference type="PhylomeDB" id="Q7Z1Z9"/>
<dbReference type="PRO" id="PR:Q7Z1Z9"/>
<dbReference type="Proteomes" id="UP000002195">
    <property type="component" value="Chromosome 5"/>
</dbReference>
<dbReference type="GO" id="GO:0005737">
    <property type="term" value="C:cytoplasm"/>
    <property type="evidence" value="ECO:0000314"/>
    <property type="project" value="dictyBase"/>
</dbReference>
<dbReference type="GO" id="GO:0016020">
    <property type="term" value="C:membrane"/>
    <property type="evidence" value="ECO:0007669"/>
    <property type="project" value="UniProtKB-SubCell"/>
</dbReference>
<dbReference type="GO" id="GO:0005634">
    <property type="term" value="C:nucleus"/>
    <property type="evidence" value="ECO:0000314"/>
    <property type="project" value="dictyBase"/>
</dbReference>
<dbReference type="GO" id="GO:0030246">
    <property type="term" value="F:carbohydrate binding"/>
    <property type="evidence" value="ECO:0007669"/>
    <property type="project" value="UniProtKB-KW"/>
</dbReference>
<dbReference type="GO" id="GO:0043157">
    <property type="term" value="P:response to cation stress"/>
    <property type="evidence" value="ECO:0000314"/>
    <property type="project" value="dictyBase"/>
</dbReference>
<dbReference type="FunFam" id="2.80.10.50:FF:000086">
    <property type="entry name" value="Calcium up-regulated protein A"/>
    <property type="match status" value="1"/>
</dbReference>
<dbReference type="FunFam" id="2.80.10.50:FF:000098">
    <property type="entry name" value="Calcium up-regulated protein A"/>
    <property type="match status" value="1"/>
</dbReference>
<dbReference type="Gene3D" id="2.80.10.50">
    <property type="match status" value="2"/>
</dbReference>
<dbReference type="InterPro" id="IPR051780">
    <property type="entry name" value="Ca_Up-reg_Membrane_Reg"/>
</dbReference>
<dbReference type="InterPro" id="IPR035992">
    <property type="entry name" value="Ricin_B-like_lectins"/>
</dbReference>
<dbReference type="InterPro" id="IPR000772">
    <property type="entry name" value="Ricin_B_lectin"/>
</dbReference>
<dbReference type="PANTHER" id="PTHR31599">
    <property type="entry name" value="CALCIUM UP-REGULATED PROTEIN A-RELATED"/>
    <property type="match status" value="1"/>
</dbReference>
<dbReference type="PANTHER" id="PTHR31599:SF2">
    <property type="entry name" value="CALCIUM UP-REGULATED PROTEIN A-RELATED"/>
    <property type="match status" value="1"/>
</dbReference>
<dbReference type="Pfam" id="PF00652">
    <property type="entry name" value="Ricin_B_lectin"/>
    <property type="match status" value="1"/>
</dbReference>
<dbReference type="SUPFAM" id="SSF50370">
    <property type="entry name" value="Ricin B-like lectins"/>
    <property type="match status" value="2"/>
</dbReference>
<dbReference type="PROSITE" id="PS50231">
    <property type="entry name" value="RICIN_B_LECTIN"/>
    <property type="match status" value="2"/>
</dbReference>
<evidence type="ECO:0000250" key="1"/>
<evidence type="ECO:0000255" key="2">
    <source>
        <dbReference type="PROSITE-ProRule" id="PRU00174"/>
    </source>
</evidence>
<evidence type="ECO:0000256" key="3">
    <source>
        <dbReference type="SAM" id="MobiDB-lite"/>
    </source>
</evidence>
<evidence type="ECO:0000269" key="4">
    <source>
    </source>
</evidence>
<evidence type="ECO:0000305" key="5"/>
<name>CUPG_DICDI</name>
<reference key="1">
    <citation type="journal article" date="2004" name="Eukaryot. Cell">
        <title>The Ca2+/calcineurin-regulated cup gene family in Dictyostelium discoideum and its possible involvement in development.</title>
        <authorList>
            <person name="Coukell B."/>
            <person name="Li Y."/>
            <person name="Moniakis J."/>
            <person name="Cameron A."/>
        </authorList>
    </citation>
    <scope>NUCLEOTIDE SEQUENCE [GENOMIC DNA]</scope>
    <scope>DEVELOPMENTAL STAGE</scope>
    <scope>INDUCTION</scope>
</reference>
<reference key="2">
    <citation type="journal article" date="2005" name="Nature">
        <title>The genome of the social amoeba Dictyostelium discoideum.</title>
        <authorList>
            <person name="Eichinger L."/>
            <person name="Pachebat J.A."/>
            <person name="Gloeckner G."/>
            <person name="Rajandream M.A."/>
            <person name="Sucgang R."/>
            <person name="Berriman M."/>
            <person name="Song J."/>
            <person name="Olsen R."/>
            <person name="Szafranski K."/>
            <person name="Xu Q."/>
            <person name="Tunggal B."/>
            <person name="Kummerfeld S."/>
            <person name="Madera M."/>
            <person name="Konfortov B.A."/>
            <person name="Rivero F."/>
            <person name="Bankier A.T."/>
            <person name="Lehmann R."/>
            <person name="Hamlin N."/>
            <person name="Davies R."/>
            <person name="Gaudet P."/>
            <person name="Fey P."/>
            <person name="Pilcher K."/>
            <person name="Chen G."/>
            <person name="Saunders D."/>
            <person name="Sodergren E.J."/>
            <person name="Davis P."/>
            <person name="Kerhornou A."/>
            <person name="Nie X."/>
            <person name="Hall N."/>
            <person name="Anjard C."/>
            <person name="Hemphill L."/>
            <person name="Bason N."/>
            <person name="Farbrother P."/>
            <person name="Desany B."/>
            <person name="Just E."/>
            <person name="Morio T."/>
            <person name="Rost R."/>
            <person name="Churcher C.M."/>
            <person name="Cooper J."/>
            <person name="Haydock S."/>
            <person name="van Driessche N."/>
            <person name="Cronin A."/>
            <person name="Goodhead I."/>
            <person name="Muzny D.M."/>
            <person name="Mourier T."/>
            <person name="Pain A."/>
            <person name="Lu M."/>
            <person name="Harper D."/>
            <person name="Lindsay R."/>
            <person name="Hauser H."/>
            <person name="James K.D."/>
            <person name="Quiles M."/>
            <person name="Madan Babu M."/>
            <person name="Saito T."/>
            <person name="Buchrieser C."/>
            <person name="Wardroper A."/>
            <person name="Felder M."/>
            <person name="Thangavelu M."/>
            <person name="Johnson D."/>
            <person name="Knights A."/>
            <person name="Loulseged H."/>
            <person name="Mungall K.L."/>
            <person name="Oliver K."/>
            <person name="Price C."/>
            <person name="Quail M.A."/>
            <person name="Urushihara H."/>
            <person name="Hernandez J."/>
            <person name="Rabbinowitsch E."/>
            <person name="Steffen D."/>
            <person name="Sanders M."/>
            <person name="Ma J."/>
            <person name="Kohara Y."/>
            <person name="Sharp S."/>
            <person name="Simmonds M.N."/>
            <person name="Spiegler S."/>
            <person name="Tivey A."/>
            <person name="Sugano S."/>
            <person name="White B."/>
            <person name="Walker D."/>
            <person name="Woodward J.R."/>
            <person name="Winckler T."/>
            <person name="Tanaka Y."/>
            <person name="Shaulsky G."/>
            <person name="Schleicher M."/>
            <person name="Weinstock G.M."/>
            <person name="Rosenthal A."/>
            <person name="Cox E.C."/>
            <person name="Chisholm R.L."/>
            <person name="Gibbs R.A."/>
            <person name="Loomis W.F."/>
            <person name="Platzer M."/>
            <person name="Kay R.R."/>
            <person name="Williams J.G."/>
            <person name="Dear P.H."/>
            <person name="Noegel A.A."/>
            <person name="Barrell B.G."/>
            <person name="Kuspa A."/>
        </authorList>
    </citation>
    <scope>NUCLEOTIDE SEQUENCE [LARGE SCALE GENOMIC DNA]</scope>
    <source>
        <strain>AX4</strain>
    </source>
</reference>
<feature type="chain" id="PRO_0000327955" description="Calcium up-regulated protein G">
    <location>
        <begin position="1"/>
        <end position="768"/>
    </location>
</feature>
<feature type="domain" description="Ricin B-type lectin 1" evidence="2">
    <location>
        <begin position="1"/>
        <end position="107"/>
    </location>
</feature>
<feature type="domain" description="Ricin B-type lectin 2" evidence="2">
    <location>
        <begin position="100"/>
        <end position="248"/>
    </location>
</feature>
<feature type="region of interest" description="Disordered" evidence="3">
    <location>
        <begin position="1"/>
        <end position="22"/>
    </location>
</feature>
<gene>
    <name type="primary">cupG</name>
    <name type="ORF">DDB_G0289883</name>
</gene>
<proteinExistence type="evidence at transcript level"/>
<accession>Q7Z1Z9</accession>
<accession>Q54GS6</accession>
<sequence>MINIEDISKSSNQSEEKQLKSTSSKPKYSFAAKSLFKGSNNITPYYLSTSNTFQCVASESIQTWLLSDDGHIFTSSGNFVLDVSSGGYFVELVQLNSNSKTQIWTIDTTNNKIQNQGNGNYLDIDCFNICVAPLNGNATQQWTTFRRAPIPTGNWGYFQSKQLNSNNYWGLSVLNNSTSYNTSVVMNKVQAKSKGQIWQMTSDGHILSRLDGNLVLDIGPSINGSTTNYYLNTNVYKANDLMQQWGINENNQIFNQYYPNLCIGFVGQLGVDSTVNCVLAQPSSACDTYFQFIANPTYSLNQIVGEVPEPFPAYTSGDLLASYQYLSNDATSNFTDDIRSLYTGINVSLQSFLSIVTNATCPSSIHSTEDFSNVQNQIKTELIYAINVRLVFENYSGFYSKLFSQGSSNLTNLANLINVDMSSNQMVNANYTDAITSIFYSLISEIPVGGPIIANIGQSAVEFGELMSQSNYQGASTYQVELSQLYTHLNTNYENEMANAQSMKDTILQDWGMMSKTYALCFLPTNDPSSLNMNGLDFDEISDVASVAYEIAMIQMLLPTTYQIYFTPAGYWVPYSDGDFAYSDNSGTYIMATIEYSNSYPPKELTDKLWNNGVSKQEFFLSAYGWNLATSLTYYNNTKQHNNIFKLAFPTIKNFTGVPMQFVMTNEGDNLGNFTVKTHFAKFFSTYYSCGEAGHHYFDIAVTDINKNKVANFTVDIKLKALEGSYVSIKTGSLVVQPGYAVGNPICNQGSYSLMFSASILIPIYKSE</sequence>
<keyword id="KW-0963">Cytoplasm</keyword>
<keyword id="KW-0430">Lectin</keyword>
<keyword id="KW-0472">Membrane</keyword>
<keyword id="KW-1185">Reference proteome</keyword>
<keyword id="KW-0677">Repeat</keyword>
<comment type="function">
    <text evidence="1">May play an important role in stabilizing and/or regulating the cell membrane during Ca(2+) stress or certain stages of development.</text>
</comment>
<comment type="subcellular location">
    <subcellularLocation>
        <location>Cytoplasm</location>
    </subcellularLocation>
    <subcellularLocation>
        <location evidence="1">Membrane</location>
        <topology evidence="1">Peripheral membrane protein</topology>
    </subcellularLocation>
</comment>
<comment type="developmental stage">
    <text evidence="4">Expressed at high levels during aggregation and late development and at low levels during the slug stage.</text>
</comment>
<comment type="induction">
    <text evidence="4">Induced by high levels of extracellular Ca(2+).</text>
</comment>
<comment type="similarity">
    <text evidence="5">Belongs to the cup family.</text>
</comment>
<organism>
    <name type="scientific">Dictyostelium discoideum</name>
    <name type="common">Social amoeba</name>
    <dbReference type="NCBI Taxonomy" id="44689"/>
    <lineage>
        <taxon>Eukaryota</taxon>
        <taxon>Amoebozoa</taxon>
        <taxon>Evosea</taxon>
        <taxon>Eumycetozoa</taxon>
        <taxon>Dictyostelia</taxon>
        <taxon>Dictyosteliales</taxon>
        <taxon>Dictyosteliaceae</taxon>
        <taxon>Dictyostelium</taxon>
    </lineage>
</organism>